<accession>Q9SFF4</accession>
<accession>F4HZP6</accession>
<accession>Q0WRM5</accession>
<accession>Q84WK7</accession>
<accession>Q9XHZ6</accession>
<name>FPP2_ARATH</name>
<sequence length="629" mass="71106">MMTGTTLILEPVMDSKDELVKQHAKVAEDAVAGWEKAENEVVELKQKLEDAADKNIVLEDRVSHLDGALKECVRQLRQFRDEQEKNIQAAVTESTKELHSANTGLEKRVLELQKEAEAAKSENMMLRREFLTQREDLEIVMIERDLSTQAAETASKQHLDIIKKLAKLEAECRKLRILAKTSSSLSSNQSVDSHSDGGRERVEGSCSDSWASSAFISELDQIKNEKGGNRSLQGTTSSTEIDLMDDFLEMERLVALPTETQAKNSKDGYELSLMEKLEKIQAEKDDLEREVKCCREAEKRLSLEIEAVVGDKMELEDMLKRVEAEKAELKTSFDVLKDKYQESRVCFQEVDTKLEKLQAEKDELDSEVICCKEAEKRFSLELEAVVGDKIEMEDELEKMEAEKAELKISFDVIKDQYQESRVCFQEVEMKLEAMKRELKLANESKTQAESRVTRMEAEVRKERIVSDGLKEKCETFEEELRREIEEKTMIKREKVEPKIKQEDIATAAGKFADCQKTIASLGKQLQSLATLEEFLIDTASIPGSARSVHNKEALLGKDPHECIKTINGRSLEFLAIQNSNNKTSPPCSSSSDSTTVSLIMSSNRGSSEKNRNGFATVFTRSRNSVNLGI</sequence>
<evidence type="ECO:0000250" key="1"/>
<evidence type="ECO:0000255" key="2"/>
<evidence type="ECO:0000256" key="3">
    <source>
        <dbReference type="SAM" id="MobiDB-lite"/>
    </source>
</evidence>
<evidence type="ECO:0000269" key="4">
    <source>
    </source>
</evidence>
<evidence type="ECO:0000303" key="5">
    <source>
    </source>
</evidence>
<evidence type="ECO:0000303" key="6">
    <source>
    </source>
</evidence>
<evidence type="ECO:0000305" key="7"/>
<evidence type="ECO:0000312" key="8">
    <source>
        <dbReference type="Araport" id="AT1G21810"/>
    </source>
</evidence>
<evidence type="ECO:0000312" key="9">
    <source>
        <dbReference type="EMBL" id="AAD41435.1"/>
    </source>
</evidence>
<evidence type="ECO:0000312" key="10">
    <source>
        <dbReference type="EMBL" id="AAF16547.1"/>
    </source>
</evidence>
<organism>
    <name type="scientific">Arabidopsis thaliana</name>
    <name type="common">Mouse-ear cress</name>
    <dbReference type="NCBI Taxonomy" id="3702"/>
    <lineage>
        <taxon>Eukaryota</taxon>
        <taxon>Viridiplantae</taxon>
        <taxon>Streptophyta</taxon>
        <taxon>Embryophyta</taxon>
        <taxon>Tracheophyta</taxon>
        <taxon>Spermatophyta</taxon>
        <taxon>Magnoliopsida</taxon>
        <taxon>eudicotyledons</taxon>
        <taxon>Gunneridae</taxon>
        <taxon>Pentapetalae</taxon>
        <taxon>rosids</taxon>
        <taxon>malvids</taxon>
        <taxon>Brassicales</taxon>
        <taxon>Brassicaceae</taxon>
        <taxon>Camelineae</taxon>
        <taxon>Arabidopsis</taxon>
    </lineage>
</organism>
<comment type="function">
    <text evidence="4">Ensures, when in complex with FPP3/VETH1 and COG2, the correct secondary cell wall (SCW) deposition pattern by recruiting exocyst components to cortical microtubules in xylem cells during secondary cell wall deposition by recruiting EXO70A1.</text>
</comment>
<comment type="subunit">
    <text evidence="1 4">Interacts with WPP/MAF proteins (By similarity). Binds to COG2; this interaction promotes the association between cortical microtubules and EXO70A1 (PubMed:25541219).</text>
</comment>
<comment type="subcellular location">
    <subcellularLocation>
        <location evidence="4">Vesicle</location>
    </subcellularLocation>
    <text evidence="4">Present in vesicle-like small compartments which exhibit microtubule plus-end-directed and end-tracking dynamics.</text>
</comment>
<comment type="tissue specificity">
    <text evidence="4">Accumulates in preferentially xylem cells.</text>
</comment>
<comment type="similarity">
    <text evidence="7">Belongs to the FPP family.</text>
</comment>
<comment type="sequence caution" evidence="7">
    <conflict type="erroneous gene model prediction">
        <sequence resource="EMBL-CDS" id="AAD41435"/>
    </conflict>
</comment>
<feature type="chain" id="PRO_0000347200" description="Filament-like plant protein 2">
    <location>
        <begin position="1"/>
        <end position="629"/>
    </location>
</feature>
<feature type="region of interest" description="Disordered" evidence="3">
    <location>
        <begin position="186"/>
        <end position="205"/>
    </location>
</feature>
<feature type="coiled-coil region" evidence="2">
    <location>
        <begin position="34"/>
        <end position="61"/>
    </location>
</feature>
<feature type="coiled-coil region" evidence="2">
    <location>
        <begin position="102"/>
        <end position="171"/>
    </location>
</feature>
<feature type="coiled-coil region" evidence="2">
    <location>
        <begin position="270"/>
        <end position="493"/>
    </location>
</feature>
<feature type="compositionally biased region" description="Basic and acidic residues" evidence="3">
    <location>
        <begin position="193"/>
        <end position="203"/>
    </location>
</feature>
<proteinExistence type="evidence at protein level"/>
<protein>
    <recommendedName>
        <fullName evidence="5">Filament-like plant protein 2</fullName>
        <shortName evidence="5">AtFPP2</shortName>
    </recommendedName>
    <alternativeName>
        <fullName evidence="6">Protein VESICLE TETHERING 2</fullName>
    </alternativeName>
</protein>
<gene>
    <name evidence="5" type="primary">FPP2</name>
    <name evidence="6" type="synonym">VETH2</name>
    <name evidence="8" type="ordered locus">At1g21810</name>
    <name evidence="9" type="ORF">F8K7.24</name>
    <name evidence="10" type="ORF">T26F17.2</name>
</gene>
<keyword id="KW-0175">Coiled coil</keyword>
<keyword id="KW-1185">Reference proteome</keyword>
<dbReference type="EMBL" id="AC007727">
    <property type="protein sequence ID" value="AAD41435.1"/>
    <property type="status" value="ALT_SEQ"/>
    <property type="molecule type" value="Genomic_DNA"/>
</dbReference>
<dbReference type="EMBL" id="AC013482">
    <property type="protein sequence ID" value="AAF16547.1"/>
    <property type="molecule type" value="Genomic_DNA"/>
</dbReference>
<dbReference type="EMBL" id="CP002684">
    <property type="protein sequence ID" value="AEE30158.2"/>
    <property type="molecule type" value="Genomic_DNA"/>
</dbReference>
<dbReference type="EMBL" id="CP002684">
    <property type="protein sequence ID" value="ANM58512.1"/>
    <property type="molecule type" value="Genomic_DNA"/>
</dbReference>
<dbReference type="EMBL" id="AK228278">
    <property type="protein sequence ID" value="BAF00224.1"/>
    <property type="molecule type" value="mRNA"/>
</dbReference>
<dbReference type="EMBL" id="BT003117">
    <property type="protein sequence ID" value="AAO24549.1"/>
    <property type="molecule type" value="mRNA"/>
</dbReference>
<dbReference type="PIR" id="F86351">
    <property type="entry name" value="F86351"/>
</dbReference>
<dbReference type="RefSeq" id="NP_001320941.1">
    <property type="nucleotide sequence ID" value="NM_001332529.1"/>
</dbReference>
<dbReference type="RefSeq" id="NP_173599.2">
    <property type="nucleotide sequence ID" value="NM_102029.3"/>
</dbReference>
<dbReference type="SMR" id="Q9SFF4"/>
<dbReference type="BioGRID" id="24023">
    <property type="interactions" value="2"/>
</dbReference>
<dbReference type="FunCoup" id="Q9SFF4">
    <property type="interactions" value="112"/>
</dbReference>
<dbReference type="IntAct" id="Q9SFF4">
    <property type="interactions" value="2"/>
</dbReference>
<dbReference type="STRING" id="3702.Q9SFF4"/>
<dbReference type="iPTMnet" id="Q9SFF4"/>
<dbReference type="PaxDb" id="3702-AT1G21810.1"/>
<dbReference type="ProteomicsDB" id="230112"/>
<dbReference type="EnsemblPlants" id="AT1G21810.1">
    <property type="protein sequence ID" value="AT1G21810.1"/>
    <property type="gene ID" value="AT1G21810"/>
</dbReference>
<dbReference type="EnsemblPlants" id="AT1G21810.3">
    <property type="protein sequence ID" value="AT1G21810.3"/>
    <property type="gene ID" value="AT1G21810"/>
</dbReference>
<dbReference type="GeneID" id="838784"/>
<dbReference type="Gramene" id="AT1G21810.1">
    <property type="protein sequence ID" value="AT1G21810.1"/>
    <property type="gene ID" value="AT1G21810"/>
</dbReference>
<dbReference type="Gramene" id="AT1G21810.3">
    <property type="protein sequence ID" value="AT1G21810.3"/>
    <property type="gene ID" value="AT1G21810"/>
</dbReference>
<dbReference type="KEGG" id="ath:AT1G21810"/>
<dbReference type="Araport" id="AT1G21810"/>
<dbReference type="TAIR" id="AT1G21810">
    <property type="gene designation" value="VETH2"/>
</dbReference>
<dbReference type="eggNOG" id="ENOG502QQJ4">
    <property type="taxonomic scope" value="Eukaryota"/>
</dbReference>
<dbReference type="HOGENOM" id="CLU_012828_0_0_1"/>
<dbReference type="InParanoid" id="Q9SFF4"/>
<dbReference type="OMA" id="GYFKLAM"/>
<dbReference type="PhylomeDB" id="Q9SFF4"/>
<dbReference type="PRO" id="PR:Q9SFF4"/>
<dbReference type="Proteomes" id="UP000006548">
    <property type="component" value="Chromosome 1"/>
</dbReference>
<dbReference type="ExpressionAtlas" id="Q9SFF4">
    <property type="expression patterns" value="baseline and differential"/>
</dbReference>
<dbReference type="GO" id="GO:0031410">
    <property type="term" value="C:cytoplasmic vesicle"/>
    <property type="evidence" value="ECO:0000314"/>
    <property type="project" value="UniProtKB"/>
</dbReference>
<dbReference type="GO" id="GO:0060178">
    <property type="term" value="P:regulation of exocyst localization"/>
    <property type="evidence" value="ECO:0000314"/>
    <property type="project" value="UniProtKB"/>
</dbReference>
<dbReference type="InterPro" id="IPR008587">
    <property type="entry name" value="FPP_plant"/>
</dbReference>
<dbReference type="PANTHER" id="PTHR31580:SF5">
    <property type="entry name" value="FILAMENT-LIKE PLANT PROTEIN 1-RELATED"/>
    <property type="match status" value="1"/>
</dbReference>
<dbReference type="PANTHER" id="PTHR31580">
    <property type="entry name" value="FILAMENT-LIKE PLANT PROTEIN 4"/>
    <property type="match status" value="1"/>
</dbReference>
<dbReference type="Pfam" id="PF05911">
    <property type="entry name" value="FPP"/>
    <property type="match status" value="4"/>
</dbReference>
<reference key="1">
    <citation type="journal article" date="2000" name="Nature">
        <title>Sequence and analysis of chromosome 1 of the plant Arabidopsis thaliana.</title>
        <authorList>
            <person name="Theologis A."/>
            <person name="Ecker J.R."/>
            <person name="Palm C.J."/>
            <person name="Federspiel N.A."/>
            <person name="Kaul S."/>
            <person name="White O."/>
            <person name="Alonso J."/>
            <person name="Altafi H."/>
            <person name="Araujo R."/>
            <person name="Bowman C.L."/>
            <person name="Brooks S.Y."/>
            <person name="Buehler E."/>
            <person name="Chan A."/>
            <person name="Chao Q."/>
            <person name="Chen H."/>
            <person name="Cheuk R.F."/>
            <person name="Chin C.W."/>
            <person name="Chung M.K."/>
            <person name="Conn L."/>
            <person name="Conway A.B."/>
            <person name="Conway A.R."/>
            <person name="Creasy T.H."/>
            <person name="Dewar K."/>
            <person name="Dunn P."/>
            <person name="Etgu P."/>
            <person name="Feldblyum T.V."/>
            <person name="Feng J.-D."/>
            <person name="Fong B."/>
            <person name="Fujii C.Y."/>
            <person name="Gill J.E."/>
            <person name="Goldsmith A.D."/>
            <person name="Haas B."/>
            <person name="Hansen N.F."/>
            <person name="Hughes B."/>
            <person name="Huizar L."/>
            <person name="Hunter J.L."/>
            <person name="Jenkins J."/>
            <person name="Johnson-Hopson C."/>
            <person name="Khan S."/>
            <person name="Khaykin E."/>
            <person name="Kim C.J."/>
            <person name="Koo H.L."/>
            <person name="Kremenetskaia I."/>
            <person name="Kurtz D.B."/>
            <person name="Kwan A."/>
            <person name="Lam B."/>
            <person name="Langin-Hooper S."/>
            <person name="Lee A."/>
            <person name="Lee J.M."/>
            <person name="Lenz C.A."/>
            <person name="Li J.H."/>
            <person name="Li Y.-P."/>
            <person name="Lin X."/>
            <person name="Liu S.X."/>
            <person name="Liu Z.A."/>
            <person name="Luros J.S."/>
            <person name="Maiti R."/>
            <person name="Marziali A."/>
            <person name="Militscher J."/>
            <person name="Miranda M."/>
            <person name="Nguyen M."/>
            <person name="Nierman W.C."/>
            <person name="Osborne B.I."/>
            <person name="Pai G."/>
            <person name="Peterson J."/>
            <person name="Pham P.K."/>
            <person name="Rizzo M."/>
            <person name="Rooney T."/>
            <person name="Rowley D."/>
            <person name="Sakano H."/>
            <person name="Salzberg S.L."/>
            <person name="Schwartz J.R."/>
            <person name="Shinn P."/>
            <person name="Southwick A.M."/>
            <person name="Sun H."/>
            <person name="Tallon L.J."/>
            <person name="Tambunga G."/>
            <person name="Toriumi M.J."/>
            <person name="Town C.D."/>
            <person name="Utterback T."/>
            <person name="Van Aken S."/>
            <person name="Vaysberg M."/>
            <person name="Vysotskaia V.S."/>
            <person name="Walker M."/>
            <person name="Wu D."/>
            <person name="Yu G."/>
            <person name="Fraser C.M."/>
            <person name="Venter J.C."/>
            <person name="Davis R.W."/>
        </authorList>
    </citation>
    <scope>NUCLEOTIDE SEQUENCE [LARGE SCALE GENOMIC DNA]</scope>
    <source>
        <strain>cv. Columbia</strain>
    </source>
</reference>
<reference key="2">
    <citation type="journal article" date="2017" name="Plant J.">
        <title>Araport11: a complete reannotation of the Arabidopsis thaliana reference genome.</title>
        <authorList>
            <person name="Cheng C.Y."/>
            <person name="Krishnakumar V."/>
            <person name="Chan A.P."/>
            <person name="Thibaud-Nissen F."/>
            <person name="Schobel S."/>
            <person name="Town C.D."/>
        </authorList>
    </citation>
    <scope>GENOME REANNOTATION</scope>
    <source>
        <strain>cv. Columbia</strain>
    </source>
</reference>
<reference key="3">
    <citation type="submission" date="2006-07" db="EMBL/GenBank/DDBJ databases">
        <title>Large-scale analysis of RIKEN Arabidopsis full-length (RAFL) cDNAs.</title>
        <authorList>
            <person name="Totoki Y."/>
            <person name="Seki M."/>
            <person name="Ishida J."/>
            <person name="Nakajima M."/>
            <person name="Enju A."/>
            <person name="Kamiya A."/>
            <person name="Narusaka M."/>
            <person name="Shin-i T."/>
            <person name="Nakagawa M."/>
            <person name="Sakamoto N."/>
            <person name="Oishi K."/>
            <person name="Kohara Y."/>
            <person name="Kobayashi M."/>
            <person name="Toyoda A."/>
            <person name="Sakaki Y."/>
            <person name="Sakurai T."/>
            <person name="Iida K."/>
            <person name="Akiyama K."/>
            <person name="Satou M."/>
            <person name="Toyoda T."/>
            <person name="Konagaya A."/>
            <person name="Carninci P."/>
            <person name="Kawai J."/>
            <person name="Hayashizaki Y."/>
            <person name="Shinozaki K."/>
        </authorList>
    </citation>
    <scope>NUCLEOTIDE SEQUENCE [LARGE SCALE MRNA] OF 405-629</scope>
    <source>
        <strain>cv. Columbia</strain>
    </source>
</reference>
<reference key="4">
    <citation type="journal article" date="2003" name="Science">
        <title>Empirical analysis of transcriptional activity in the Arabidopsis genome.</title>
        <authorList>
            <person name="Yamada K."/>
            <person name="Lim J."/>
            <person name="Dale J.M."/>
            <person name="Chen H."/>
            <person name="Shinn P."/>
            <person name="Palm C.J."/>
            <person name="Southwick A.M."/>
            <person name="Wu H.C."/>
            <person name="Kim C.J."/>
            <person name="Nguyen M."/>
            <person name="Pham P.K."/>
            <person name="Cheuk R.F."/>
            <person name="Karlin-Newmann G."/>
            <person name="Liu S.X."/>
            <person name="Lam B."/>
            <person name="Sakano H."/>
            <person name="Wu T."/>
            <person name="Yu G."/>
            <person name="Miranda M."/>
            <person name="Quach H.L."/>
            <person name="Tripp M."/>
            <person name="Chang C.H."/>
            <person name="Lee J.M."/>
            <person name="Toriumi M.J."/>
            <person name="Chan M.M."/>
            <person name="Tang C.C."/>
            <person name="Onodera C.S."/>
            <person name="Deng J.M."/>
            <person name="Akiyama K."/>
            <person name="Ansari Y."/>
            <person name="Arakawa T."/>
            <person name="Banh J."/>
            <person name="Banno F."/>
            <person name="Bowser L."/>
            <person name="Brooks S.Y."/>
            <person name="Carninci P."/>
            <person name="Chao Q."/>
            <person name="Choy N."/>
            <person name="Enju A."/>
            <person name="Goldsmith A.D."/>
            <person name="Gurjal M."/>
            <person name="Hansen N.F."/>
            <person name="Hayashizaki Y."/>
            <person name="Johnson-Hopson C."/>
            <person name="Hsuan V.W."/>
            <person name="Iida K."/>
            <person name="Karnes M."/>
            <person name="Khan S."/>
            <person name="Koesema E."/>
            <person name="Ishida J."/>
            <person name="Jiang P.X."/>
            <person name="Jones T."/>
            <person name="Kawai J."/>
            <person name="Kamiya A."/>
            <person name="Meyers C."/>
            <person name="Nakajima M."/>
            <person name="Narusaka M."/>
            <person name="Seki M."/>
            <person name="Sakurai T."/>
            <person name="Satou M."/>
            <person name="Tamse R."/>
            <person name="Vaysberg M."/>
            <person name="Wallender E.K."/>
            <person name="Wong C."/>
            <person name="Yamamura Y."/>
            <person name="Yuan S."/>
            <person name="Shinozaki K."/>
            <person name="Davis R.W."/>
            <person name="Theologis A."/>
            <person name="Ecker J.R."/>
        </authorList>
    </citation>
    <scope>NUCLEOTIDE SEQUENCE [LARGE SCALE MRNA] OF 429-629</scope>
    <source>
        <strain>cv. Columbia</strain>
    </source>
</reference>
<reference key="5">
    <citation type="journal article" date="2002" name="BMC Genomics">
        <title>Four signature motifs define the first class of structurally related large coiled-coil proteins in plants.</title>
        <authorList>
            <person name="Gindullis F."/>
            <person name="Rose A."/>
            <person name="Patel S."/>
            <person name="Meier I."/>
        </authorList>
    </citation>
    <scope>GENE FAMILY</scope>
    <scope>NOMENCLATURE</scope>
</reference>
<reference key="6">
    <citation type="journal article" date="2015" name="Plant Cell Physiol.">
        <title>Novel coiled-coil proteins regulate exocyst association with cortical microtubules in xylem cells via the conserved oligomeric golgi-complex 2 protein.</title>
        <authorList>
            <person name="Oda Y."/>
            <person name="Iida Y."/>
            <person name="Nagashima Y."/>
            <person name="Sugiyama Y."/>
            <person name="Fukuda H."/>
        </authorList>
    </citation>
    <scope>FUNCTION</scope>
    <scope>INTERACTION WITH COG2</scope>
    <scope>TISSUE SPECIFICITY</scope>
    <scope>SUBCELLULAR LOCATION</scope>
</reference>